<name>PHOT_CHLRE</name>
<protein>
    <recommendedName>
        <fullName evidence="12">Phototropin</fullName>
        <ecNumber evidence="8 9">2.7.11.1</ecNumber>
    </recommendedName>
    <alternativeName>
        <fullName evidence="12">Blue light receptor PHOT</fullName>
    </alternativeName>
</protein>
<sequence length="749" mass="81395">MAGVPAPASQLTKVLAGLRHTFVVADATLPDCPLVYASEGFYAMTGYGPDEVLGHNCRFLQGEGTDPKEVQKIRDAIKKGEACSVRLLNYRKDGTPFWNLLTVTPIKTPDGRVSKFVGVQVDVTSKTEGKALADNSGVPLLVKYDHRLRDNVARTIVDDVTIAVEKAEGVEPGQASAVAAAAPLGAKGPRGTAPKSFPRVALDLATTVERIQQNFCISDPTLPDCPIVFASDAFLELTGYSREEVLGRNCRFLQGAGTDRGTVDQIRAAIKEGSELTVRILNYTKAGKAFWNMFTLAPMRDQDGHARFFVGVQVDVTAQSTSPDKAPVWNKTPEEEVAKAKMGAEAASLISSALQGMAAPTTANPWAAISGVIMRRKPHKADDKAYQALLQLQERDGKMKLMHFRRVKQLGAGDVGLVDLVQLQGSELKFAMKTLDKFEMQERNKVARVLTESAILAAVDHPFLATLYCTIQTDTHLHFVMEYCDGGELYGLLNSQPKKRLKEEHVRFYASEVLTALQYLHLLGYVYRDLKPENILLHHTGHVLLTDFDLSYSKGSTTPRIEKIGGAGAAGGSAPKSPKKSSSKSGGSSSGSALQLENYLLLAEPSARANSFVGTEEYLAPEVINAAGHGPAVDWWSLGILIFELLYGTTPFRGARRDETFENIIKSPLKFPSKPAVSEECRDLIEKLLVKDVGARLGSRTGANEIKSHPWFKGINWALLRHQQPPYVPRRASKAAGGSSTGGAAFDNY</sequence>
<keyword id="KW-0002">3D-structure</keyword>
<keyword id="KW-0025">Alternative splicing</keyword>
<keyword id="KW-0067">ATP-binding</keyword>
<keyword id="KW-0157">Chromophore</keyword>
<keyword id="KW-0285">Flavoprotein</keyword>
<keyword id="KW-0288">FMN</keyword>
<keyword id="KW-0418">Kinase</keyword>
<keyword id="KW-0472">Membrane</keyword>
<keyword id="KW-0547">Nucleotide-binding</keyword>
<keyword id="KW-0600">Photoreceptor protein</keyword>
<keyword id="KW-0675">Receptor</keyword>
<keyword id="KW-1185">Reference proteome</keyword>
<keyword id="KW-0716">Sensory transduction</keyword>
<keyword id="KW-0723">Serine/threonine-protein kinase</keyword>
<keyword id="KW-0808">Transferase</keyword>
<comment type="function">
    <text evidence="8 9 10">Protein kinase that acts as a blue light photoreceptor (PubMed:15695460, PubMed:24285544). Required for non-photochemical quenching (NPQ), a mechanism that converts and dissipates the harmful excess absorbed light energy into heat and protect the photosynthetic apparatus from photo-oxidative damage (PubMed:27626383). Controls the energy-dependent chlorophyll fluorescence quenching (qE) activity of chlorophyll excited states by inducing the expression of the qE effector protein LHCSR3 in high light intensities (PubMed:27626383).</text>
</comment>
<comment type="catalytic activity">
    <reaction evidence="8 9">
        <text>L-seryl-[protein] + ATP = O-phospho-L-seryl-[protein] + ADP + H(+)</text>
        <dbReference type="Rhea" id="RHEA:17989"/>
        <dbReference type="Rhea" id="RHEA-COMP:9863"/>
        <dbReference type="Rhea" id="RHEA-COMP:11604"/>
        <dbReference type="ChEBI" id="CHEBI:15378"/>
        <dbReference type="ChEBI" id="CHEBI:29999"/>
        <dbReference type="ChEBI" id="CHEBI:30616"/>
        <dbReference type="ChEBI" id="CHEBI:83421"/>
        <dbReference type="ChEBI" id="CHEBI:456216"/>
        <dbReference type="EC" id="2.7.11.1"/>
    </reaction>
    <physiologicalReaction direction="left-to-right" evidence="8 9">
        <dbReference type="Rhea" id="RHEA:17990"/>
    </physiologicalReaction>
</comment>
<comment type="catalytic activity">
    <reaction evidence="8 9">
        <text>L-threonyl-[protein] + ATP = O-phospho-L-threonyl-[protein] + ADP + H(+)</text>
        <dbReference type="Rhea" id="RHEA:46608"/>
        <dbReference type="Rhea" id="RHEA-COMP:11060"/>
        <dbReference type="Rhea" id="RHEA-COMP:11605"/>
        <dbReference type="ChEBI" id="CHEBI:15378"/>
        <dbReference type="ChEBI" id="CHEBI:30013"/>
        <dbReference type="ChEBI" id="CHEBI:30616"/>
        <dbReference type="ChEBI" id="CHEBI:61977"/>
        <dbReference type="ChEBI" id="CHEBI:456216"/>
        <dbReference type="EC" id="2.7.11.1"/>
    </reaction>
    <physiologicalReaction direction="left-to-right" evidence="8 9">
        <dbReference type="Rhea" id="RHEA:46609"/>
    </physiologicalReaction>
</comment>
<comment type="cofactor">
    <cofactor evidence="7">
        <name>FMN</name>
        <dbReference type="ChEBI" id="CHEBI:58210"/>
    </cofactor>
    <text evidence="13">Binds 2 FMN per subunit.</text>
</comment>
<comment type="subcellular location">
    <subcellularLocation>
        <location evidence="6">Membrane</location>
        <topology evidence="12">Peripheral membrane protein</topology>
    </subcellularLocation>
</comment>
<comment type="alternative products">
    <event type="alternative splicing"/>
    <isoform>
        <id>Q8LPD9-1</id>
        <name>1</name>
        <sequence type="displayed"/>
    </isoform>
    <isoform>
        <id>Q8LPD9-2</id>
        <name>2</name>
        <sequence type="described" ref="VSP_060225"/>
    </isoform>
</comment>
<comment type="tissue specificity">
    <text evidence="6">Expressed in gametes, pre-gametes and gametes generated by pre-gametes (at protein level).</text>
</comment>
<comment type="PTM">
    <text evidence="8">Autophosphorylated in response to blue light irradiation.</text>
</comment>
<comment type="PTM">
    <text evidence="13">2 molecules of FMN bind covalently to cysteines after exposure to blue light and are reversed in the dark.</text>
</comment>
<comment type="similarity">
    <text evidence="12">Belongs to the protein kinase superfamily. AGC Ser/Thr protein kinase family.</text>
</comment>
<organism>
    <name type="scientific">Chlamydomonas reinhardtii</name>
    <name type="common">Chlamydomonas smithii</name>
    <dbReference type="NCBI Taxonomy" id="3055"/>
    <lineage>
        <taxon>Eukaryota</taxon>
        <taxon>Viridiplantae</taxon>
        <taxon>Chlorophyta</taxon>
        <taxon>core chlorophytes</taxon>
        <taxon>Chlorophyceae</taxon>
        <taxon>CS clade</taxon>
        <taxon>Chlamydomonadales</taxon>
        <taxon>Chlamydomonadaceae</taxon>
        <taxon>Chlamydomonas</taxon>
    </lineage>
</organism>
<accession>Q8LPD9</accession>
<accession>A8IXU7</accession>
<accession>Q8LPE0</accession>
<gene>
    <name evidence="11" type="primary">PHOT</name>
    <name evidence="15" type="ORF">CHLRE_03g199000v5</name>
    <name evidence="14" type="ORF">CHLREDRAFT_183965</name>
</gene>
<proteinExistence type="evidence at protein level"/>
<feature type="chain" id="PRO_0000447660" description="Phototropin">
    <location>
        <begin position="1"/>
        <end position="749"/>
    </location>
</feature>
<feature type="domain" description="PAS 1" evidence="1">
    <location>
        <begin position="7"/>
        <end position="80"/>
    </location>
</feature>
<feature type="domain" description="PAC 1" evidence="2">
    <location>
        <begin position="81"/>
        <end position="135"/>
    </location>
</feature>
<feature type="domain" description="PAS 2" evidence="1">
    <location>
        <begin position="200"/>
        <end position="273"/>
    </location>
</feature>
<feature type="domain" description="PAC 2" evidence="2">
    <location>
        <begin position="274"/>
        <end position="328"/>
    </location>
</feature>
<feature type="domain" description="Protein kinase" evidence="3">
    <location>
        <begin position="404"/>
        <end position="712"/>
    </location>
</feature>
<feature type="domain" description="AGC-kinase C-terminal" evidence="4">
    <location>
        <begin position="713"/>
        <end position="749"/>
    </location>
</feature>
<feature type="region of interest" description="Disordered" evidence="5">
    <location>
        <begin position="563"/>
        <end position="591"/>
    </location>
</feature>
<feature type="region of interest" description="Disordered" evidence="5">
    <location>
        <begin position="729"/>
        <end position="749"/>
    </location>
</feature>
<feature type="compositionally biased region" description="Low complexity" evidence="5">
    <location>
        <begin position="734"/>
        <end position="749"/>
    </location>
</feature>
<feature type="active site" description="Proton acceptor" evidence="3">
    <location>
        <position position="529"/>
    </location>
</feature>
<feature type="binding site" evidence="7 16 17 18">
    <location>
        <begin position="56"/>
        <end position="61"/>
    </location>
    <ligand>
        <name>FMN</name>
        <dbReference type="ChEBI" id="CHEBI:58210"/>
    </ligand>
</feature>
<feature type="binding site" evidence="7 17 18">
    <location>
        <position position="74"/>
    </location>
    <ligand>
        <name>FMN</name>
        <dbReference type="ChEBI" id="CHEBI:58210"/>
    </ligand>
</feature>
<feature type="binding site" evidence="7 16 17 18">
    <location>
        <position position="89"/>
    </location>
    <ligand>
        <name>FMN</name>
        <dbReference type="ChEBI" id="CHEBI:58210"/>
    </ligand>
</feature>
<feature type="binding site" evidence="7 16 17">
    <location>
        <position position="99"/>
    </location>
    <ligand>
        <name>FMN</name>
        <dbReference type="ChEBI" id="CHEBI:58210"/>
    </ligand>
</feature>
<feature type="binding site" evidence="7 16 17">
    <location>
        <position position="120"/>
    </location>
    <ligand>
        <name>FMN</name>
        <dbReference type="ChEBI" id="CHEBI:58210"/>
    </ligand>
</feature>
<feature type="binding site" evidence="3">
    <location>
        <begin position="410"/>
        <end position="418"/>
    </location>
    <ligand>
        <name>ATP</name>
        <dbReference type="ChEBI" id="CHEBI:30616"/>
    </ligand>
</feature>
<feature type="binding site" evidence="3">
    <location>
        <position position="433"/>
    </location>
    <ligand>
        <name>ATP</name>
        <dbReference type="ChEBI" id="CHEBI:30616"/>
    </ligand>
</feature>
<feature type="modified residue" description="S-4a-FMN cysteine" evidence="7">
    <location>
        <position position="57"/>
    </location>
</feature>
<feature type="splice variant" id="VSP_060225" description="In isoform 2.">
    <original>P</original>
    <variation>PA</variation>
    <location>
        <position position="631"/>
    </location>
</feature>
<feature type="mutagenesis site" description="No effect on blue light-induced kinase activity." evidence="9">
    <original>C</original>
    <variation>A</variation>
    <location>
        <position position="57"/>
    </location>
</feature>
<feature type="mutagenesis site" description="Small decrease of blue light-induced kinase activity." evidence="9">
    <original>C</original>
    <variation>A</variation>
    <location>
        <position position="250"/>
    </location>
</feature>
<feature type="mutagenesis site" description="Loss of kinase activity." evidence="9">
    <original>D</original>
    <variation>N</variation>
    <location>
        <position position="547"/>
    </location>
</feature>
<feature type="sequence conflict" description="In Ref. 1; CAC94940." evidence="12" ref="1">
    <original>D</original>
    <variation>E</variation>
    <location>
        <position position="485"/>
    </location>
</feature>
<feature type="strand" evidence="19">
    <location>
        <begin position="21"/>
        <end position="26"/>
    </location>
</feature>
<feature type="strand" evidence="19">
    <location>
        <begin position="34"/>
        <end position="37"/>
    </location>
</feature>
<feature type="helix" evidence="19">
    <location>
        <begin position="39"/>
        <end position="45"/>
    </location>
</feature>
<feature type="helix" evidence="19">
    <location>
        <begin position="49"/>
        <end position="52"/>
    </location>
</feature>
<feature type="helix" evidence="19">
    <location>
        <begin position="57"/>
        <end position="60"/>
    </location>
</feature>
<feature type="strand" evidence="20">
    <location>
        <begin position="63"/>
        <end position="65"/>
    </location>
</feature>
<feature type="helix" evidence="19">
    <location>
        <begin position="67"/>
        <end position="79"/>
    </location>
</feature>
<feature type="strand" evidence="19">
    <location>
        <begin position="83"/>
        <end position="90"/>
    </location>
</feature>
<feature type="strand" evidence="19">
    <location>
        <begin position="96"/>
        <end position="107"/>
    </location>
</feature>
<feature type="strand" evidence="19">
    <location>
        <begin position="113"/>
        <end position="122"/>
    </location>
</feature>
<dbReference type="EC" id="2.7.11.1" evidence="8 9"/>
<dbReference type="EMBL" id="AJ416556">
    <property type="protein sequence ID" value="CAC94940.1"/>
    <property type="molecule type" value="Genomic_DNA"/>
</dbReference>
<dbReference type="EMBL" id="AJ416557">
    <property type="protein sequence ID" value="CAC94941.1"/>
    <property type="molecule type" value="mRNA"/>
</dbReference>
<dbReference type="EMBL" id="DS496126">
    <property type="protein sequence ID" value="EDP03413.1"/>
    <property type="molecule type" value="Genomic_DNA"/>
</dbReference>
<dbReference type="EMBL" id="CM008964">
    <property type="protein sequence ID" value="PNW85943.1"/>
    <property type="molecule type" value="Genomic_DNA"/>
</dbReference>
<dbReference type="PDB" id="1N9L">
    <property type="method" value="X-ray"/>
    <property type="resolution" value="1.90 A"/>
    <property type="chains" value="A=17-125"/>
</dbReference>
<dbReference type="PDB" id="1N9N">
    <property type="method" value="X-ray"/>
    <property type="resolution" value="2.30 A"/>
    <property type="chains" value="A=17-125"/>
</dbReference>
<dbReference type="PDB" id="1N9O">
    <property type="method" value="X-ray"/>
    <property type="resolution" value="2.80 A"/>
    <property type="chains" value="A=17-125"/>
</dbReference>
<dbReference type="PDB" id="8QI8">
    <property type="method" value="X-ray"/>
    <property type="resolution" value="1.35 A"/>
    <property type="chains" value="A=16-133"/>
</dbReference>
<dbReference type="PDB" id="8QI9">
    <property type="method" value="X-ray"/>
    <property type="resolution" value="1.87 A"/>
    <property type="chains" value="A=16-133"/>
</dbReference>
<dbReference type="PDB" id="8QIA">
    <property type="method" value="X-ray"/>
    <property type="resolution" value="2.50 A"/>
    <property type="chains" value="A=16-133"/>
</dbReference>
<dbReference type="PDB" id="8QIB">
    <property type="method" value="X-ray"/>
    <property type="resolution" value="2.45 A"/>
    <property type="chains" value="A=16-133"/>
</dbReference>
<dbReference type="PDB" id="8QIF">
    <property type="method" value="X-ray"/>
    <property type="resolution" value="2.45 A"/>
    <property type="chains" value="A=16-133"/>
</dbReference>
<dbReference type="PDB" id="8QIG">
    <property type="method" value="X-ray"/>
    <property type="resolution" value="2.50 A"/>
    <property type="chains" value="A=16-133"/>
</dbReference>
<dbReference type="PDB" id="8QIH">
    <property type="method" value="X-ray"/>
    <property type="resolution" value="2.50 A"/>
    <property type="chains" value="A=16-133"/>
</dbReference>
<dbReference type="PDB" id="8QII">
    <property type="method" value="X-ray"/>
    <property type="resolution" value="2.50 A"/>
    <property type="chains" value="A=16-133"/>
</dbReference>
<dbReference type="PDB" id="8QIK">
    <property type="method" value="X-ray"/>
    <property type="resolution" value="2.55 A"/>
    <property type="chains" value="A=16-133"/>
</dbReference>
<dbReference type="PDB" id="8QIL">
    <property type="method" value="X-ray"/>
    <property type="resolution" value="2.55 A"/>
    <property type="chains" value="A=16-133"/>
</dbReference>
<dbReference type="PDB" id="8QIM">
    <property type="method" value="X-ray"/>
    <property type="resolution" value="2.60 A"/>
    <property type="chains" value="A=16-133"/>
</dbReference>
<dbReference type="PDB" id="8QIN">
    <property type="method" value="X-ray"/>
    <property type="resolution" value="2.70 A"/>
    <property type="chains" value="A=16-133"/>
</dbReference>
<dbReference type="PDB" id="8QIO">
    <property type="method" value="X-ray"/>
    <property type="resolution" value="2.75 A"/>
    <property type="chains" value="A=16-133"/>
</dbReference>
<dbReference type="PDB" id="8QIP">
    <property type="method" value="X-ray"/>
    <property type="resolution" value="2.70 A"/>
    <property type="chains" value="A=16-133"/>
</dbReference>
<dbReference type="PDB" id="8QIQ">
    <property type="method" value="X-ray"/>
    <property type="resolution" value="2.90 A"/>
    <property type="chains" value="A=16-133"/>
</dbReference>
<dbReference type="PDB" id="8QIR">
    <property type="method" value="X-ray"/>
    <property type="resolution" value="3.00 A"/>
    <property type="chains" value="A=16-133"/>
</dbReference>
<dbReference type="PDB" id="8QIS">
    <property type="method" value="X-ray"/>
    <property type="resolution" value="2.90 A"/>
    <property type="chains" value="A=16-133"/>
</dbReference>
<dbReference type="PDB" id="8QIT">
    <property type="method" value="X-ray"/>
    <property type="resolution" value="2.90 A"/>
    <property type="chains" value="A=16-133"/>
</dbReference>
<dbReference type="PDB" id="8QIU">
    <property type="method" value="X-ray"/>
    <property type="resolution" value="3.00 A"/>
    <property type="chains" value="A=16-133"/>
</dbReference>
<dbReference type="PDB" id="8QIV">
    <property type="method" value="X-ray"/>
    <property type="resolution" value="3.10 A"/>
    <property type="chains" value="A=16-133"/>
</dbReference>
<dbReference type="PDB" id="8QIW">
    <property type="method" value="X-ray"/>
    <property type="resolution" value="3.05 A"/>
    <property type="chains" value="A=16-133"/>
</dbReference>
<dbReference type="PDBsum" id="1N9L"/>
<dbReference type="PDBsum" id="1N9N"/>
<dbReference type="PDBsum" id="1N9O"/>
<dbReference type="PDBsum" id="8QI8"/>
<dbReference type="PDBsum" id="8QI9"/>
<dbReference type="PDBsum" id="8QIA"/>
<dbReference type="PDBsum" id="8QIB"/>
<dbReference type="PDBsum" id="8QIF"/>
<dbReference type="PDBsum" id="8QIG"/>
<dbReference type="PDBsum" id="8QIH"/>
<dbReference type="PDBsum" id="8QII"/>
<dbReference type="PDBsum" id="8QIK"/>
<dbReference type="PDBsum" id="8QIL"/>
<dbReference type="PDBsum" id="8QIM"/>
<dbReference type="PDBsum" id="8QIN"/>
<dbReference type="PDBsum" id="8QIO"/>
<dbReference type="PDBsum" id="8QIP"/>
<dbReference type="PDBsum" id="8QIQ"/>
<dbReference type="PDBsum" id="8QIR"/>
<dbReference type="PDBsum" id="8QIS"/>
<dbReference type="PDBsum" id="8QIT"/>
<dbReference type="PDBsum" id="8QIU"/>
<dbReference type="PDBsum" id="8QIV"/>
<dbReference type="PDBsum" id="8QIW"/>
<dbReference type="SMR" id="Q8LPD9"/>
<dbReference type="FunCoup" id="Q8LPD9">
    <property type="interactions" value="539"/>
</dbReference>
<dbReference type="STRING" id="3055.Q8LPD9"/>
<dbReference type="PaxDb" id="3055-EDP03413"/>
<dbReference type="ProMEX" id="Q8LPD9"/>
<dbReference type="EnsemblPlants" id="PNW85943">
    <molecule id="Q8LPD9-1"/>
    <property type="protein sequence ID" value="PNW85943"/>
    <property type="gene ID" value="CHLRE_03g199000v5"/>
</dbReference>
<dbReference type="Gramene" id="PNW85943">
    <molecule id="Q8LPD9-1"/>
    <property type="protein sequence ID" value="PNW85943"/>
    <property type="gene ID" value="CHLRE_03g199000v5"/>
</dbReference>
<dbReference type="eggNOG" id="ENOG502QPPH">
    <property type="taxonomic scope" value="Eukaryota"/>
</dbReference>
<dbReference type="HOGENOM" id="CLU_006321_3_1_1"/>
<dbReference type="InParanoid" id="Q8LPD9"/>
<dbReference type="OMA" id="THVCLIS"/>
<dbReference type="OrthoDB" id="432483at2759"/>
<dbReference type="EvolutionaryTrace" id="Q8LPD9"/>
<dbReference type="Proteomes" id="UP000006906">
    <property type="component" value="Chromosome 3"/>
</dbReference>
<dbReference type="ExpressionAtlas" id="Q8LPD9">
    <property type="expression patterns" value="baseline and differential"/>
</dbReference>
<dbReference type="GO" id="GO:0005737">
    <property type="term" value="C:cytoplasm"/>
    <property type="evidence" value="ECO:0000318"/>
    <property type="project" value="GO_Central"/>
</dbReference>
<dbReference type="GO" id="GO:0005634">
    <property type="term" value="C:nucleus"/>
    <property type="evidence" value="ECO:0000318"/>
    <property type="project" value="GO_Central"/>
</dbReference>
<dbReference type="GO" id="GO:0005886">
    <property type="term" value="C:plasma membrane"/>
    <property type="evidence" value="ECO:0000318"/>
    <property type="project" value="GO_Central"/>
</dbReference>
<dbReference type="GO" id="GO:0005524">
    <property type="term" value="F:ATP binding"/>
    <property type="evidence" value="ECO:0007669"/>
    <property type="project" value="UniProtKB-KW"/>
</dbReference>
<dbReference type="GO" id="GO:0009882">
    <property type="term" value="F:blue light photoreceptor activity"/>
    <property type="evidence" value="ECO:0000314"/>
    <property type="project" value="UniProtKB"/>
</dbReference>
<dbReference type="GO" id="GO:0106310">
    <property type="term" value="F:protein serine kinase activity"/>
    <property type="evidence" value="ECO:0007669"/>
    <property type="project" value="RHEA"/>
</dbReference>
<dbReference type="GO" id="GO:0004674">
    <property type="term" value="F:protein serine/threonine kinase activity"/>
    <property type="evidence" value="ECO:0000314"/>
    <property type="project" value="UniProtKB"/>
</dbReference>
<dbReference type="GO" id="GO:0009785">
    <property type="term" value="P:blue light signaling pathway"/>
    <property type="evidence" value="ECO:0000314"/>
    <property type="project" value="UniProtKB"/>
</dbReference>
<dbReference type="GO" id="GO:0046777">
    <property type="term" value="P:protein autophosphorylation"/>
    <property type="evidence" value="ECO:0000314"/>
    <property type="project" value="UniProtKB"/>
</dbReference>
<dbReference type="GO" id="GO:0006468">
    <property type="term" value="P:protein phosphorylation"/>
    <property type="evidence" value="ECO:0000314"/>
    <property type="project" value="UniProtKB"/>
</dbReference>
<dbReference type="CDD" id="cd00130">
    <property type="entry name" value="PAS"/>
    <property type="match status" value="2"/>
</dbReference>
<dbReference type="CDD" id="cd05574">
    <property type="entry name" value="STKc_phototropin_like"/>
    <property type="match status" value="1"/>
</dbReference>
<dbReference type="Gene3D" id="3.30.450.20">
    <property type="entry name" value="PAS domain"/>
    <property type="match status" value="2"/>
</dbReference>
<dbReference type="Gene3D" id="3.30.200.20">
    <property type="entry name" value="Phosphorylase Kinase, domain 1"/>
    <property type="match status" value="1"/>
</dbReference>
<dbReference type="Gene3D" id="1.10.510.10">
    <property type="entry name" value="Transferase(Phosphotransferase) domain 1"/>
    <property type="match status" value="2"/>
</dbReference>
<dbReference type="InterPro" id="IPR000961">
    <property type="entry name" value="AGC-kinase_C"/>
</dbReference>
<dbReference type="InterPro" id="IPR011009">
    <property type="entry name" value="Kinase-like_dom_sf"/>
</dbReference>
<dbReference type="InterPro" id="IPR001610">
    <property type="entry name" value="PAC"/>
</dbReference>
<dbReference type="InterPro" id="IPR000014">
    <property type="entry name" value="PAS"/>
</dbReference>
<dbReference type="InterPro" id="IPR000700">
    <property type="entry name" value="PAS-assoc_C"/>
</dbReference>
<dbReference type="InterPro" id="IPR035965">
    <property type="entry name" value="PAS-like_dom_sf"/>
</dbReference>
<dbReference type="InterPro" id="IPR000719">
    <property type="entry name" value="Prot_kinase_dom"/>
</dbReference>
<dbReference type="InterPro" id="IPR008271">
    <property type="entry name" value="Ser/Thr_kinase_AS"/>
</dbReference>
<dbReference type="NCBIfam" id="TIGR00229">
    <property type="entry name" value="sensory_box"/>
    <property type="match status" value="2"/>
</dbReference>
<dbReference type="PANTHER" id="PTHR45637">
    <property type="entry name" value="FLIPPASE KINASE 1-RELATED"/>
    <property type="match status" value="1"/>
</dbReference>
<dbReference type="Pfam" id="PF13426">
    <property type="entry name" value="PAS_9"/>
    <property type="match status" value="2"/>
</dbReference>
<dbReference type="Pfam" id="PF00069">
    <property type="entry name" value="Pkinase"/>
    <property type="match status" value="2"/>
</dbReference>
<dbReference type="SMART" id="SM00086">
    <property type="entry name" value="PAC"/>
    <property type="match status" value="2"/>
</dbReference>
<dbReference type="SMART" id="SM00091">
    <property type="entry name" value="PAS"/>
    <property type="match status" value="2"/>
</dbReference>
<dbReference type="SMART" id="SM00220">
    <property type="entry name" value="S_TKc"/>
    <property type="match status" value="1"/>
</dbReference>
<dbReference type="SUPFAM" id="SSF56112">
    <property type="entry name" value="Protein kinase-like (PK-like)"/>
    <property type="match status" value="1"/>
</dbReference>
<dbReference type="SUPFAM" id="SSF55785">
    <property type="entry name" value="PYP-like sensor domain (PAS domain)"/>
    <property type="match status" value="2"/>
</dbReference>
<dbReference type="PROSITE" id="PS51285">
    <property type="entry name" value="AGC_KINASE_CTER"/>
    <property type="match status" value="1"/>
</dbReference>
<dbReference type="PROSITE" id="PS50113">
    <property type="entry name" value="PAC"/>
    <property type="match status" value="2"/>
</dbReference>
<dbReference type="PROSITE" id="PS50112">
    <property type="entry name" value="PAS"/>
    <property type="match status" value="2"/>
</dbReference>
<dbReference type="PROSITE" id="PS50011">
    <property type="entry name" value="PROTEIN_KINASE_DOM"/>
    <property type="match status" value="1"/>
</dbReference>
<dbReference type="PROSITE" id="PS00108">
    <property type="entry name" value="PROTEIN_KINASE_ST"/>
    <property type="match status" value="1"/>
</dbReference>
<reference key="1">
    <citation type="journal article" date="2002" name="Physiol. Plantarum">
        <title>Isolation and characterization of a Chlamydomonas gene that encodes a putative blue-light photoreceptor of the phototropin family.</title>
        <authorList>
            <person name="Huang K.Y."/>
            <person name="Merkle T."/>
            <person name="Beck C.F."/>
        </authorList>
    </citation>
    <scope>NUCLEOTIDE SEQUENCE [GENOMIC DNA / MRNA] (ISOFORMS 1 AND 2)</scope>
    <scope>SUBCELLULAR LOCATION</scope>
    <scope>TISSUE SPECIFICITY</scope>
    <source>
        <strain>cw15</strain>
    </source>
</reference>
<reference key="2">
    <citation type="journal article" date="2007" name="Science">
        <title>The Chlamydomonas genome reveals the evolution of key animal and plant functions.</title>
        <authorList>
            <person name="Merchant S.S."/>
            <person name="Prochnik S.E."/>
            <person name="Vallon O."/>
            <person name="Harris E.H."/>
            <person name="Karpowicz S.J."/>
            <person name="Witman G.B."/>
            <person name="Terry A."/>
            <person name="Salamov A."/>
            <person name="Fritz-Laylin L.K."/>
            <person name="Marechal-Drouard L."/>
            <person name="Marshall W.F."/>
            <person name="Qu L.H."/>
            <person name="Nelson D.R."/>
            <person name="Sanderfoot A.A."/>
            <person name="Spalding M.H."/>
            <person name="Kapitonov V.V."/>
            <person name="Ren Q."/>
            <person name="Ferris P."/>
            <person name="Lindquist E."/>
            <person name="Shapiro H."/>
            <person name="Lucas S.M."/>
            <person name="Grimwood J."/>
            <person name="Schmutz J."/>
            <person name="Cardol P."/>
            <person name="Cerutti H."/>
            <person name="Chanfreau G."/>
            <person name="Chen C.L."/>
            <person name="Cognat V."/>
            <person name="Croft M.T."/>
            <person name="Dent R."/>
            <person name="Dutcher S."/>
            <person name="Fernandez E."/>
            <person name="Fukuzawa H."/>
            <person name="Gonzalez-Ballester D."/>
            <person name="Gonzalez-Halphen D."/>
            <person name="Hallmann A."/>
            <person name="Hanikenne M."/>
            <person name="Hippler M."/>
            <person name="Inwood W."/>
            <person name="Jabbari K."/>
            <person name="Kalanon M."/>
            <person name="Kuras R."/>
            <person name="Lefebvre P.A."/>
            <person name="Lemaire S.D."/>
            <person name="Lobanov A.V."/>
            <person name="Lohr M."/>
            <person name="Manuell A."/>
            <person name="Meier I."/>
            <person name="Mets L."/>
            <person name="Mittag M."/>
            <person name="Mittelmeier T."/>
            <person name="Moroney J.V."/>
            <person name="Moseley J."/>
            <person name="Napoli C."/>
            <person name="Nedelcu A.M."/>
            <person name="Niyogi K."/>
            <person name="Novoselov S.V."/>
            <person name="Paulsen I.T."/>
            <person name="Pazour G.J."/>
            <person name="Purton S."/>
            <person name="Ral J.P."/>
            <person name="Riano-Pachon D.M."/>
            <person name="Riekhof W."/>
            <person name="Rymarquis L."/>
            <person name="Schroda M."/>
            <person name="Stern D."/>
            <person name="Umen J."/>
            <person name="Willows R."/>
            <person name="Wilson N."/>
            <person name="Zimmer S.L."/>
            <person name="Allmer J."/>
            <person name="Balk J."/>
            <person name="Bisova K."/>
            <person name="Chen C.J."/>
            <person name="Elias M."/>
            <person name="Gendler K."/>
            <person name="Hauser C."/>
            <person name="Lamb M.R."/>
            <person name="Ledford H."/>
            <person name="Long J.C."/>
            <person name="Minagawa J."/>
            <person name="Page M.D."/>
            <person name="Pan J."/>
            <person name="Pootakham W."/>
            <person name="Roje S."/>
            <person name="Rose A."/>
            <person name="Stahlberg E."/>
            <person name="Terauchi A.M."/>
            <person name="Yang P."/>
            <person name="Ball S."/>
            <person name="Bowler C."/>
            <person name="Dieckmann C.L."/>
            <person name="Gladyshev V.N."/>
            <person name="Green P."/>
            <person name="Jorgensen R."/>
            <person name="Mayfield S."/>
            <person name="Mueller-Roeber B."/>
            <person name="Rajamani S."/>
            <person name="Sayre R.T."/>
            <person name="Brokstein P."/>
            <person name="Dubchak I."/>
            <person name="Goodstein D."/>
            <person name="Hornick L."/>
            <person name="Huang Y.W."/>
            <person name="Jhaveri J."/>
            <person name="Luo Y."/>
            <person name="Martinez D."/>
            <person name="Ngau W.C."/>
            <person name="Otillar B."/>
            <person name="Poliakov A."/>
            <person name="Porter A."/>
            <person name="Szajkowski L."/>
            <person name="Werner G."/>
            <person name="Zhou K."/>
            <person name="Grigoriev I.V."/>
            <person name="Rokhsar D.S."/>
            <person name="Grossman A.R."/>
        </authorList>
    </citation>
    <scope>NUCLEOTIDE SEQUENCE [LARGE SCALE GENOMIC DNA]</scope>
    <source>
        <strain>CC-503</strain>
    </source>
</reference>
<reference key="3">
    <citation type="submission" date="2017-07" db="EMBL/GenBank/DDBJ databases">
        <title>WGS assembly of Chlamydomonas reinhardtii.</title>
        <authorList>
            <consortium name="Chlamydomonas Annotation Team"/>
            <consortium name="JGI Annotation Team"/>
            <person name="Merchant S.S."/>
            <person name="Prochnik S.E."/>
            <person name="Vallon O."/>
            <person name="Harris E.H."/>
            <person name="Karpowicz S.J."/>
            <person name="Witman G.B."/>
            <person name="Terry A."/>
            <person name="Salamov A."/>
            <person name="Fritz-Laylin L.K."/>
            <person name="Marechal-Drouard L."/>
            <person name="Marshall W.F."/>
            <person name="Qu L.H."/>
            <person name="Nelson D.R."/>
            <person name="Sanderfoot A.A."/>
            <person name="Spalding M.H."/>
            <person name="Kapitonov V.V."/>
            <person name="Ren Q."/>
            <person name="Ferris P."/>
            <person name="Lindquist E."/>
            <person name="Shapiro H."/>
            <person name="Lucas S.M."/>
            <person name="Grimwood J."/>
            <person name="Schmutz J."/>
            <person name="Grigoriev I.V."/>
            <person name="Rokhsar D.S."/>
        </authorList>
    </citation>
    <scope>GENOME REANNOTATION</scope>
    <source>
        <strain>CC-503</strain>
    </source>
</reference>
<reference key="4">
    <citation type="journal article" date="2005" name="Plant Cell Physiol.">
        <title>Phototropin from Chlamydomonas reinhardtii is functional in Arabidopsis thaliana.</title>
        <authorList>
            <person name="Onodera A."/>
            <person name="Kong S.G."/>
            <person name="Doi M."/>
            <person name="Shimazaki K."/>
            <person name="Christie J."/>
            <person name="Mochizuki N."/>
            <person name="Nagatani A."/>
        </authorList>
    </citation>
    <scope>FUNCTION</scope>
    <scope>CATALYTIC ACTIVITY</scope>
    <scope>AUTOPHOSPHORYLATION</scope>
</reference>
<reference key="5">
    <citation type="journal article" date="2014" name="J. Biol. Chem.">
        <title>Light-induced conformational changes of LOV1 (light oxygen voltage-sensing domain 1) and LOV2 relative to the kinase domain and regulation of kinase activity in Chlamydomonas phototropin.</title>
        <authorList>
            <person name="Okajima K."/>
            <person name="Aihara Y."/>
            <person name="Takayama Y."/>
            <person name="Nakajima M."/>
            <person name="Kashojiya S."/>
            <person name="Hikima T."/>
            <person name="Oroguchi T."/>
            <person name="Kobayashi A."/>
            <person name="Sekiguchi Y."/>
            <person name="Yamamoto M."/>
            <person name="Suzuki T."/>
            <person name="Nagatani A."/>
            <person name="Nakasako M."/>
            <person name="Tokutomi S."/>
        </authorList>
    </citation>
    <scope>FUNCTION</scope>
    <scope>CATALYTIC ACTIVITY</scope>
    <scope>MUTAGENESIS OF CYS-57; CYS-250 AND ASP-547</scope>
</reference>
<reference key="6">
    <citation type="journal article" date="2016" name="Nature">
        <title>A blue-light photoreceptor mediates the feedback regulation of photosynthesis.</title>
        <authorList>
            <person name="Petroutsos D."/>
            <person name="Tokutsu R."/>
            <person name="Maruyama S."/>
            <person name="Flori S."/>
            <person name="Greiner A."/>
            <person name="Magneschi L."/>
            <person name="Cusant L."/>
            <person name="Kottke T."/>
            <person name="Mittag M."/>
            <person name="Hegemann P."/>
            <person name="Finazzi G."/>
            <person name="Minagawa J."/>
        </authorList>
    </citation>
    <scope>FUNCTION</scope>
</reference>
<reference key="7">
    <citation type="journal article" date="2003" name="Biophys. J.">
        <title>Crystal structures and molecular mechanism of a light-induced signaling switch: The Phot-LOV1 domain from Chlamydomonas reinhardtii.</title>
        <authorList>
            <person name="Fedorov R."/>
            <person name="Schlichting I."/>
            <person name="Hartmann E."/>
            <person name="Domratcheva T."/>
            <person name="Fuhrmann M."/>
            <person name="Hegemann P."/>
        </authorList>
    </citation>
    <scope>X-RAY CRYSTALLOGRAPHY (1.90 ANGSTROMS) OF 17-125 IN COMPLEX WITH FMN</scope>
    <scope>COFACTOR</scope>
</reference>
<evidence type="ECO:0000255" key="1">
    <source>
        <dbReference type="PROSITE-ProRule" id="PRU00140"/>
    </source>
</evidence>
<evidence type="ECO:0000255" key="2">
    <source>
        <dbReference type="PROSITE-ProRule" id="PRU00141"/>
    </source>
</evidence>
<evidence type="ECO:0000255" key="3">
    <source>
        <dbReference type="PROSITE-ProRule" id="PRU00159"/>
    </source>
</evidence>
<evidence type="ECO:0000255" key="4">
    <source>
        <dbReference type="PROSITE-ProRule" id="PRU00618"/>
    </source>
</evidence>
<evidence type="ECO:0000256" key="5">
    <source>
        <dbReference type="SAM" id="MobiDB-lite"/>
    </source>
</evidence>
<evidence type="ECO:0000269" key="6">
    <source>
    </source>
</evidence>
<evidence type="ECO:0000269" key="7">
    <source>
    </source>
</evidence>
<evidence type="ECO:0000269" key="8">
    <source>
    </source>
</evidence>
<evidence type="ECO:0000269" key="9">
    <source>
    </source>
</evidence>
<evidence type="ECO:0000269" key="10">
    <source>
    </source>
</evidence>
<evidence type="ECO:0000303" key="11">
    <source>
    </source>
</evidence>
<evidence type="ECO:0000305" key="12"/>
<evidence type="ECO:0000305" key="13">
    <source>
    </source>
</evidence>
<evidence type="ECO:0000312" key="14">
    <source>
        <dbReference type="EMBL" id="EDP03413.1"/>
    </source>
</evidence>
<evidence type="ECO:0000312" key="15">
    <source>
        <dbReference type="EMBL" id="PNW85943.1"/>
    </source>
</evidence>
<evidence type="ECO:0007744" key="16">
    <source>
        <dbReference type="PDB" id="1N9L"/>
    </source>
</evidence>
<evidence type="ECO:0007744" key="17">
    <source>
        <dbReference type="PDB" id="1N9N"/>
    </source>
</evidence>
<evidence type="ECO:0007744" key="18">
    <source>
        <dbReference type="PDB" id="1N9O"/>
    </source>
</evidence>
<evidence type="ECO:0007829" key="19">
    <source>
        <dbReference type="PDB" id="8QI8"/>
    </source>
</evidence>
<evidence type="ECO:0007829" key="20">
    <source>
        <dbReference type="PDB" id="8QIP"/>
    </source>
</evidence>